<comment type="function">
    <text>Component of the thioredoxin-thioredoxin reductase system. Participates in various redox reactions through the reversible oxidation of its active center dithiol to a disulfide and catalyzes dithiol-disulfide exchange reactions.</text>
</comment>
<comment type="similarity">
    <text evidence="2">Belongs to the thioredoxin family.</text>
</comment>
<feature type="chain" id="PRO_0000120135" description="Thioredoxin">
    <location>
        <begin position="1"/>
        <end position="107"/>
    </location>
</feature>
<feature type="domain" description="Thioredoxin" evidence="1">
    <location>
        <begin position="2"/>
        <end position="107"/>
    </location>
</feature>
<feature type="disulfide bond" description="Redox-active" evidence="1">
    <location>
        <begin position="33"/>
        <end position="36"/>
    </location>
</feature>
<keyword id="KW-1015">Disulfide bond</keyword>
<keyword id="KW-0249">Electron transport</keyword>
<keyword id="KW-0676">Redox-active center</keyword>
<keyword id="KW-0813">Transport</keyword>
<name>THIO_STRCL</name>
<protein>
    <recommendedName>
        <fullName>Thioredoxin</fullName>
        <shortName>Trx</shortName>
    </recommendedName>
</protein>
<proteinExistence type="evidence at protein level"/>
<sequence length="107" mass="11483">MAGVLKNVTDDTFEADVLKSEKPVLVDFWAEWCGPCRQIAPSLEAITEHGGQIEIVKLNIDQNPATAAKYGVMSIPTLNVYQGGEVVKTIVGAKPKAALLRPGPVPR</sequence>
<accession>Q05739</accession>
<gene>
    <name type="primary">trxA</name>
</gene>
<reference key="1">
    <citation type="journal article" date="1993" name="J. Bacteriol.">
        <title>Thioredoxin-thioredoxin reductase system of Streptomyces clavuligerus: sequences, expression, and organization of the genes.</title>
        <authorList>
            <person name="Cohen G."/>
            <person name="Yanko M."/>
            <person name="Mislovati M."/>
            <person name="Argaman A."/>
            <person name="Schreiber R."/>
            <person name="Av-Gay Y."/>
            <person name="Aharonowitz Y."/>
        </authorList>
    </citation>
    <scope>NUCLEOTIDE SEQUENCE [GENOMIC DNA]</scope>
    <source>
        <strain>ATCC 27064 / DSM 738 / JCM 4710 / NBRC 13307 / NCIMB 12785 / NRRL 3585 / VKM Ac-602</strain>
    </source>
</reference>
<reference key="2">
    <citation type="journal article" date="1993" name="J. Bacteriol.">
        <title>Characterization of a broad-range disulfide reductase from Streptomyces clavuligerus and its possible role in beta-lactam antibiotic biosynthesis.</title>
        <authorList>
            <person name="Aharonowitz Y."/>
            <person name="Av-Gay Y."/>
            <person name="Schreiber R."/>
            <person name="Cohen G."/>
        </authorList>
    </citation>
    <scope>CHARACTERIZATION</scope>
    <source>
        <strain>ATCC 27064 / DSM 738 / JCM 4710 / NBRC 13307 / NCIMB 12785 / NRRL 3585 / VKM Ac-602</strain>
    </source>
</reference>
<organism>
    <name type="scientific">Streptomyces clavuligerus</name>
    <dbReference type="NCBI Taxonomy" id="1901"/>
    <lineage>
        <taxon>Bacteria</taxon>
        <taxon>Bacillati</taxon>
        <taxon>Actinomycetota</taxon>
        <taxon>Actinomycetes</taxon>
        <taxon>Kitasatosporales</taxon>
        <taxon>Streptomycetaceae</taxon>
        <taxon>Streptomyces</taxon>
    </lineage>
</organism>
<evidence type="ECO:0000255" key="1">
    <source>
        <dbReference type="PROSITE-ProRule" id="PRU00691"/>
    </source>
</evidence>
<evidence type="ECO:0000305" key="2"/>
<dbReference type="EMBL" id="Z21946">
    <property type="protein sequence ID" value="CAA79941.1"/>
    <property type="molecule type" value="Genomic_DNA"/>
</dbReference>
<dbReference type="PIR" id="B53307">
    <property type="entry name" value="B53307"/>
</dbReference>
<dbReference type="SMR" id="Q05739"/>
<dbReference type="STRING" id="1901.BB341_14070"/>
<dbReference type="eggNOG" id="COG3118">
    <property type="taxonomic scope" value="Bacteria"/>
</dbReference>
<dbReference type="GO" id="GO:0005829">
    <property type="term" value="C:cytosol"/>
    <property type="evidence" value="ECO:0007669"/>
    <property type="project" value="TreeGrafter"/>
</dbReference>
<dbReference type="GO" id="GO:0015035">
    <property type="term" value="F:protein-disulfide reductase activity"/>
    <property type="evidence" value="ECO:0007669"/>
    <property type="project" value="InterPro"/>
</dbReference>
<dbReference type="GO" id="GO:0045454">
    <property type="term" value="P:cell redox homeostasis"/>
    <property type="evidence" value="ECO:0007669"/>
    <property type="project" value="TreeGrafter"/>
</dbReference>
<dbReference type="CDD" id="cd02947">
    <property type="entry name" value="TRX_family"/>
    <property type="match status" value="1"/>
</dbReference>
<dbReference type="FunFam" id="3.40.30.10:FF:000001">
    <property type="entry name" value="Thioredoxin"/>
    <property type="match status" value="1"/>
</dbReference>
<dbReference type="Gene3D" id="3.40.30.10">
    <property type="entry name" value="Glutaredoxin"/>
    <property type="match status" value="1"/>
</dbReference>
<dbReference type="InterPro" id="IPR005746">
    <property type="entry name" value="Thioredoxin"/>
</dbReference>
<dbReference type="InterPro" id="IPR036249">
    <property type="entry name" value="Thioredoxin-like_sf"/>
</dbReference>
<dbReference type="InterPro" id="IPR017937">
    <property type="entry name" value="Thioredoxin_CS"/>
</dbReference>
<dbReference type="InterPro" id="IPR013766">
    <property type="entry name" value="Thioredoxin_domain"/>
</dbReference>
<dbReference type="NCBIfam" id="TIGR01068">
    <property type="entry name" value="thioredoxin"/>
    <property type="match status" value="1"/>
</dbReference>
<dbReference type="PANTHER" id="PTHR45663">
    <property type="entry name" value="GEO12009P1"/>
    <property type="match status" value="1"/>
</dbReference>
<dbReference type="PANTHER" id="PTHR45663:SF11">
    <property type="entry name" value="GEO12009P1"/>
    <property type="match status" value="1"/>
</dbReference>
<dbReference type="Pfam" id="PF00085">
    <property type="entry name" value="Thioredoxin"/>
    <property type="match status" value="1"/>
</dbReference>
<dbReference type="PIRSF" id="PIRSF000077">
    <property type="entry name" value="Thioredoxin"/>
    <property type="match status" value="1"/>
</dbReference>
<dbReference type="PRINTS" id="PR00421">
    <property type="entry name" value="THIOREDOXIN"/>
</dbReference>
<dbReference type="SUPFAM" id="SSF52833">
    <property type="entry name" value="Thioredoxin-like"/>
    <property type="match status" value="1"/>
</dbReference>
<dbReference type="PROSITE" id="PS00194">
    <property type="entry name" value="THIOREDOXIN_1"/>
    <property type="match status" value="1"/>
</dbReference>
<dbReference type="PROSITE" id="PS51352">
    <property type="entry name" value="THIOREDOXIN_2"/>
    <property type="match status" value="1"/>
</dbReference>